<reference key="1">
    <citation type="submission" date="2000-01" db="EMBL/GenBank/DDBJ databases">
        <title>Physical mapping of 38 loci including aimE, ampC, ampR, arcA, aroK, catR, cypH, dapB, envA, envC, ftsA, ftsZ, groEL, murE, opdE, oprD, oprF, oprH, oprI, oprK, oprP, pbpB, pbpC, pheS, phoA, phoB, phoS, ponA, pyoS1, qin, rpoB, rpoH, sodB, soxR, sucC.</title>
        <authorList>
            <person name="Levesque R.C."/>
            <person name="Liao X."/>
            <person name="Lightfoot J."/>
            <person name="Charlebois I."/>
            <person name="Ouellet C."/>
            <person name="Morency M."/>
            <person name="Dewar K."/>
            <person name="Siehnel R."/>
            <person name="Lam J."/>
            <person name="Hancock R.E."/>
        </authorList>
    </citation>
    <scope>NUCLEOTIDE SEQUENCE [GENOMIC DNA]</scope>
    <source>
        <strain>ATCC 15692 / DSM 22644 / CIP 104116 / JCM 14847 / LMG 12228 / 1C / PRS 101 / PAO1</strain>
    </source>
</reference>
<reference key="2">
    <citation type="journal article" date="2000" name="Nature">
        <title>Complete genome sequence of Pseudomonas aeruginosa PAO1, an opportunistic pathogen.</title>
        <authorList>
            <person name="Stover C.K."/>
            <person name="Pham X.-Q.T."/>
            <person name="Erwin A.L."/>
            <person name="Mizoguchi S.D."/>
            <person name="Warrener P."/>
            <person name="Hickey M.J."/>
            <person name="Brinkman F.S.L."/>
            <person name="Hufnagle W.O."/>
            <person name="Kowalik D.J."/>
            <person name="Lagrou M."/>
            <person name="Garber R.L."/>
            <person name="Goltry L."/>
            <person name="Tolentino E."/>
            <person name="Westbrock-Wadman S."/>
            <person name="Yuan Y."/>
            <person name="Brody L.L."/>
            <person name="Coulter S.N."/>
            <person name="Folger K.R."/>
            <person name="Kas A."/>
            <person name="Larbig K."/>
            <person name="Lim R.M."/>
            <person name="Smith K.A."/>
            <person name="Spencer D.H."/>
            <person name="Wong G.K.-S."/>
            <person name="Wu Z."/>
            <person name="Paulsen I.T."/>
            <person name="Reizer J."/>
            <person name="Saier M.H. Jr."/>
            <person name="Hancock R.E.W."/>
            <person name="Lory S."/>
            <person name="Olson M.V."/>
        </authorList>
    </citation>
    <scope>NUCLEOTIDE SEQUENCE [LARGE SCALE GENOMIC DNA]</scope>
    <source>
        <strain>ATCC 15692 / DSM 22644 / CIP 104116 / JCM 14847 / LMG 12228 / 1C / PRS 101 / PAO1</strain>
    </source>
</reference>
<gene>
    <name evidence="2" type="primary">ddlB</name>
    <name type="ordered locus">PA4410</name>
</gene>
<name>DDLB_PSEAE</name>
<comment type="function">
    <text evidence="2">Cell wall formation.</text>
</comment>
<comment type="catalytic activity">
    <reaction evidence="2">
        <text>2 D-alanine + ATP = D-alanyl-D-alanine + ADP + phosphate + H(+)</text>
        <dbReference type="Rhea" id="RHEA:11224"/>
        <dbReference type="ChEBI" id="CHEBI:15378"/>
        <dbReference type="ChEBI" id="CHEBI:30616"/>
        <dbReference type="ChEBI" id="CHEBI:43474"/>
        <dbReference type="ChEBI" id="CHEBI:57416"/>
        <dbReference type="ChEBI" id="CHEBI:57822"/>
        <dbReference type="ChEBI" id="CHEBI:456216"/>
        <dbReference type="EC" id="6.3.2.4"/>
    </reaction>
</comment>
<comment type="cofactor">
    <cofactor evidence="1">
        <name>Mg(2+)</name>
        <dbReference type="ChEBI" id="CHEBI:18420"/>
    </cofactor>
    <cofactor evidence="1">
        <name>Mn(2+)</name>
        <dbReference type="ChEBI" id="CHEBI:29035"/>
    </cofactor>
    <text evidence="1">Binds 2 magnesium or manganese ions per subunit.</text>
</comment>
<comment type="pathway">
    <text evidence="2">Cell wall biogenesis; peptidoglycan biosynthesis.</text>
</comment>
<comment type="subcellular location">
    <subcellularLocation>
        <location evidence="2">Cytoplasm</location>
    </subcellularLocation>
</comment>
<comment type="similarity">
    <text evidence="2">Belongs to the D-alanine--D-alanine ligase family.</text>
</comment>
<evidence type="ECO:0000250" key="1"/>
<evidence type="ECO:0000255" key="2">
    <source>
        <dbReference type="HAMAP-Rule" id="MF_00047"/>
    </source>
</evidence>
<evidence type="ECO:0007829" key="3">
    <source>
        <dbReference type="PDB" id="8EVY"/>
    </source>
</evidence>
<sequence>MNLCLDSLLNGTQDPKAFGRVAVLFGGKSAEREVSLKSGAMVLQSLLAAGVDAFGIDVGEDLLQRLVEEKIDRAFIILHGRGGEDGSMQGLLECAGIPYTGSGVLASALAMDKLRTKRVWLSLGLPTPDYAVLASEDDCREAAQRLGFPLIVKPAHEGSSIGMAKVGGLDELIAAWREAARYDSQVLVEQWISGPEFTVATLRGQVLPAIRLGTPHTFYDYDAKYLASDTRYQVPCGLDEAKERELKELTARACDALGIQGWGRADVMQDAEGRFWLLEVNTAPGMTDHSLVPMAARAAGLDFQQLVLAILADSREARG</sequence>
<keyword id="KW-0002">3D-structure</keyword>
<keyword id="KW-0067">ATP-binding</keyword>
<keyword id="KW-0133">Cell shape</keyword>
<keyword id="KW-0961">Cell wall biogenesis/degradation</keyword>
<keyword id="KW-0963">Cytoplasm</keyword>
<keyword id="KW-0436">Ligase</keyword>
<keyword id="KW-0460">Magnesium</keyword>
<keyword id="KW-0464">Manganese</keyword>
<keyword id="KW-0479">Metal-binding</keyword>
<keyword id="KW-0547">Nucleotide-binding</keyword>
<keyword id="KW-0573">Peptidoglycan synthesis</keyword>
<keyword id="KW-1185">Reference proteome</keyword>
<organism>
    <name type="scientific">Pseudomonas aeruginosa (strain ATCC 15692 / DSM 22644 / CIP 104116 / JCM 14847 / LMG 12228 / 1C / PRS 101 / PAO1)</name>
    <dbReference type="NCBI Taxonomy" id="208964"/>
    <lineage>
        <taxon>Bacteria</taxon>
        <taxon>Pseudomonadati</taxon>
        <taxon>Pseudomonadota</taxon>
        <taxon>Gammaproteobacteria</taxon>
        <taxon>Pseudomonadales</taxon>
        <taxon>Pseudomonadaceae</taxon>
        <taxon>Pseudomonas</taxon>
    </lineage>
</organism>
<feature type="chain" id="PRO_0000177856" description="D-alanine--D-alanine ligase B">
    <location>
        <begin position="1"/>
        <end position="319"/>
    </location>
</feature>
<feature type="domain" description="ATP-grasp" evidence="2">
    <location>
        <begin position="117"/>
        <end position="312"/>
    </location>
</feature>
<feature type="binding site" evidence="2">
    <location>
        <begin position="143"/>
        <end position="198"/>
    </location>
    <ligand>
        <name>ATP</name>
        <dbReference type="ChEBI" id="CHEBI:30616"/>
    </ligand>
</feature>
<feature type="binding site" evidence="2">
    <location>
        <position position="266"/>
    </location>
    <ligand>
        <name>Mg(2+)</name>
        <dbReference type="ChEBI" id="CHEBI:18420"/>
        <label>1</label>
    </ligand>
</feature>
<feature type="binding site" evidence="2">
    <location>
        <position position="279"/>
    </location>
    <ligand>
        <name>Mg(2+)</name>
        <dbReference type="ChEBI" id="CHEBI:18420"/>
        <label>1</label>
    </ligand>
</feature>
<feature type="binding site" evidence="2">
    <location>
        <position position="279"/>
    </location>
    <ligand>
        <name>Mg(2+)</name>
        <dbReference type="ChEBI" id="CHEBI:18420"/>
        <label>2</label>
    </ligand>
</feature>
<feature type="binding site" evidence="2">
    <location>
        <position position="281"/>
    </location>
    <ligand>
        <name>Mg(2+)</name>
        <dbReference type="ChEBI" id="CHEBI:18420"/>
        <label>2</label>
    </ligand>
</feature>
<feature type="helix" evidence="3">
    <location>
        <begin position="4"/>
        <end position="8"/>
    </location>
</feature>
<feature type="turn" evidence="3">
    <location>
        <begin position="9"/>
        <end position="11"/>
    </location>
</feature>
<feature type="helix" evidence="3">
    <location>
        <begin position="15"/>
        <end position="18"/>
    </location>
</feature>
<feature type="strand" evidence="3">
    <location>
        <begin position="20"/>
        <end position="26"/>
    </location>
</feature>
<feature type="helix" evidence="3">
    <location>
        <begin position="32"/>
        <end position="48"/>
    </location>
</feature>
<feature type="strand" evidence="3">
    <location>
        <begin position="52"/>
        <end position="59"/>
    </location>
</feature>
<feature type="helix" evidence="3">
    <location>
        <begin position="62"/>
        <end position="68"/>
    </location>
</feature>
<feature type="strand" evidence="3">
    <location>
        <begin position="72"/>
        <end position="76"/>
    </location>
</feature>
<feature type="turn" evidence="3">
    <location>
        <begin position="81"/>
        <end position="83"/>
    </location>
</feature>
<feature type="strand" evidence="3">
    <location>
        <begin position="84"/>
        <end position="86"/>
    </location>
</feature>
<feature type="helix" evidence="3">
    <location>
        <begin position="87"/>
        <end position="94"/>
    </location>
</feature>
<feature type="strand" evidence="3">
    <location>
        <begin position="99"/>
        <end position="101"/>
    </location>
</feature>
<feature type="helix" evidence="3">
    <location>
        <begin position="104"/>
        <end position="111"/>
    </location>
</feature>
<feature type="helix" evidence="3">
    <location>
        <begin position="113"/>
        <end position="122"/>
    </location>
</feature>
<feature type="strand" evidence="3">
    <location>
        <begin position="130"/>
        <end position="135"/>
    </location>
</feature>
<feature type="helix" evidence="3">
    <location>
        <begin position="136"/>
        <end position="146"/>
    </location>
</feature>
<feature type="strand" evidence="3">
    <location>
        <begin position="150"/>
        <end position="154"/>
    </location>
</feature>
<feature type="turn" evidence="3">
    <location>
        <begin position="159"/>
        <end position="162"/>
    </location>
</feature>
<feature type="strand" evidence="3">
    <location>
        <begin position="164"/>
        <end position="168"/>
    </location>
</feature>
<feature type="helix" evidence="3">
    <location>
        <begin position="169"/>
        <end position="179"/>
    </location>
</feature>
<feature type="turn" evidence="3">
    <location>
        <begin position="180"/>
        <end position="182"/>
    </location>
</feature>
<feature type="strand" evidence="3">
    <location>
        <begin position="186"/>
        <end position="190"/>
    </location>
</feature>
<feature type="strand" evidence="3">
    <location>
        <begin position="196"/>
        <end position="202"/>
    </location>
</feature>
<feature type="strand" evidence="3">
    <location>
        <begin position="210"/>
        <end position="213"/>
    </location>
</feature>
<feature type="strand" evidence="3">
    <location>
        <begin position="215"/>
        <end position="219"/>
    </location>
</feature>
<feature type="helix" evidence="3">
    <location>
        <begin position="221"/>
        <end position="225"/>
    </location>
</feature>
<feature type="strand" evidence="3">
    <location>
        <begin position="231"/>
        <end position="235"/>
    </location>
</feature>
<feature type="helix" evidence="3">
    <location>
        <begin position="240"/>
        <end position="257"/>
    </location>
</feature>
<feature type="strand" evidence="3">
    <location>
        <begin position="261"/>
        <end position="269"/>
    </location>
</feature>
<feature type="strand" evidence="3">
    <location>
        <begin position="275"/>
        <end position="283"/>
    </location>
</feature>
<feature type="helix" evidence="3">
    <location>
        <begin position="291"/>
        <end position="299"/>
    </location>
</feature>
<feature type="helix" evidence="3">
    <location>
        <begin position="303"/>
        <end position="313"/>
    </location>
</feature>
<proteinExistence type="evidence at protein level"/>
<protein>
    <recommendedName>
        <fullName evidence="2">D-alanine--D-alanine ligase B</fullName>
        <ecNumber evidence="2">6.3.2.4</ecNumber>
    </recommendedName>
    <alternativeName>
        <fullName evidence="2">D-Ala-D-Ala ligase B</fullName>
    </alternativeName>
    <alternativeName>
        <fullName evidence="2">D-alanylalanine synthetase B</fullName>
    </alternativeName>
</protein>
<dbReference type="EC" id="6.3.2.4" evidence="2"/>
<dbReference type="EMBL" id="U19797">
    <property type="protein sequence ID" value="AAF26456.1"/>
    <property type="molecule type" value="Genomic_DNA"/>
</dbReference>
<dbReference type="EMBL" id="AE004091">
    <property type="protein sequence ID" value="AAG07798.1"/>
    <property type="molecule type" value="Genomic_DNA"/>
</dbReference>
<dbReference type="PIR" id="C83094">
    <property type="entry name" value="C83094"/>
</dbReference>
<dbReference type="RefSeq" id="NP_253100.1">
    <property type="nucleotide sequence ID" value="NC_002516.2"/>
</dbReference>
<dbReference type="RefSeq" id="WP_003103113.1">
    <property type="nucleotide sequence ID" value="NZ_QZGE01000004.1"/>
</dbReference>
<dbReference type="PDB" id="8EVY">
    <property type="method" value="X-ray"/>
    <property type="resolution" value="2.35 A"/>
    <property type="chains" value="A/B/C=1-319"/>
</dbReference>
<dbReference type="PDB" id="8EVZ">
    <property type="method" value="X-ray"/>
    <property type="resolution" value="2.45 A"/>
    <property type="chains" value="A/B/C=1-319"/>
</dbReference>
<dbReference type="PDBsum" id="8EVY"/>
<dbReference type="PDBsum" id="8EVZ"/>
<dbReference type="SMR" id="Q9LCT6"/>
<dbReference type="FunCoup" id="Q9LCT6">
    <property type="interactions" value="346"/>
</dbReference>
<dbReference type="STRING" id="208964.PA4410"/>
<dbReference type="PaxDb" id="208964-PA4410"/>
<dbReference type="DNASU" id="881282"/>
<dbReference type="GeneID" id="881282"/>
<dbReference type="KEGG" id="pae:PA4410"/>
<dbReference type="PATRIC" id="fig|208964.12.peg.4619"/>
<dbReference type="PseudoCAP" id="PA4410"/>
<dbReference type="HOGENOM" id="CLU_039268_1_2_6"/>
<dbReference type="InParanoid" id="Q9LCT6"/>
<dbReference type="OrthoDB" id="9813261at2"/>
<dbReference type="PhylomeDB" id="Q9LCT6"/>
<dbReference type="BioCyc" id="PAER208964:G1FZ6-4497-MONOMER"/>
<dbReference type="UniPathway" id="UPA00219"/>
<dbReference type="Proteomes" id="UP000002438">
    <property type="component" value="Chromosome"/>
</dbReference>
<dbReference type="GO" id="GO:0005829">
    <property type="term" value="C:cytosol"/>
    <property type="evidence" value="ECO:0000318"/>
    <property type="project" value="GO_Central"/>
</dbReference>
<dbReference type="GO" id="GO:0005524">
    <property type="term" value="F:ATP binding"/>
    <property type="evidence" value="ECO:0007669"/>
    <property type="project" value="UniProtKB-KW"/>
</dbReference>
<dbReference type="GO" id="GO:0008716">
    <property type="term" value="F:D-alanine-D-alanine ligase activity"/>
    <property type="evidence" value="ECO:0000318"/>
    <property type="project" value="GO_Central"/>
</dbReference>
<dbReference type="GO" id="GO:0046872">
    <property type="term" value="F:metal ion binding"/>
    <property type="evidence" value="ECO:0007669"/>
    <property type="project" value="UniProtKB-KW"/>
</dbReference>
<dbReference type="GO" id="GO:0071555">
    <property type="term" value="P:cell wall organization"/>
    <property type="evidence" value="ECO:0007669"/>
    <property type="project" value="UniProtKB-KW"/>
</dbReference>
<dbReference type="GO" id="GO:0009252">
    <property type="term" value="P:peptidoglycan biosynthetic process"/>
    <property type="evidence" value="ECO:0000318"/>
    <property type="project" value="GO_Central"/>
</dbReference>
<dbReference type="GO" id="GO:0008360">
    <property type="term" value="P:regulation of cell shape"/>
    <property type="evidence" value="ECO:0007669"/>
    <property type="project" value="UniProtKB-KW"/>
</dbReference>
<dbReference type="FunFam" id="3.30.1490.20:FF:000007">
    <property type="entry name" value="D-alanine--D-alanine ligase"/>
    <property type="match status" value="1"/>
</dbReference>
<dbReference type="FunFam" id="3.30.470.20:FF:000008">
    <property type="entry name" value="D-alanine--D-alanine ligase"/>
    <property type="match status" value="1"/>
</dbReference>
<dbReference type="FunFam" id="3.40.50.20:FF:000013">
    <property type="entry name" value="D-alanine--D-alanine ligase"/>
    <property type="match status" value="1"/>
</dbReference>
<dbReference type="Gene3D" id="3.40.50.20">
    <property type="match status" value="1"/>
</dbReference>
<dbReference type="Gene3D" id="3.30.1490.20">
    <property type="entry name" value="ATP-grasp fold, A domain"/>
    <property type="match status" value="1"/>
</dbReference>
<dbReference type="Gene3D" id="3.30.470.20">
    <property type="entry name" value="ATP-grasp fold, B domain"/>
    <property type="match status" value="1"/>
</dbReference>
<dbReference type="HAMAP" id="MF_00047">
    <property type="entry name" value="Dala_Dala_lig"/>
    <property type="match status" value="1"/>
</dbReference>
<dbReference type="InterPro" id="IPR011761">
    <property type="entry name" value="ATP-grasp"/>
</dbReference>
<dbReference type="InterPro" id="IPR013815">
    <property type="entry name" value="ATP_grasp_subdomain_1"/>
</dbReference>
<dbReference type="InterPro" id="IPR000291">
    <property type="entry name" value="D-Ala_lig_Van_CS"/>
</dbReference>
<dbReference type="InterPro" id="IPR005905">
    <property type="entry name" value="D_ala_D_ala"/>
</dbReference>
<dbReference type="InterPro" id="IPR011095">
    <property type="entry name" value="Dala_Dala_lig_C"/>
</dbReference>
<dbReference type="InterPro" id="IPR011127">
    <property type="entry name" value="Dala_Dala_lig_N"/>
</dbReference>
<dbReference type="InterPro" id="IPR016185">
    <property type="entry name" value="PreATP-grasp_dom_sf"/>
</dbReference>
<dbReference type="NCBIfam" id="TIGR01205">
    <property type="entry name" value="D_ala_D_alaTIGR"/>
    <property type="match status" value="1"/>
</dbReference>
<dbReference type="NCBIfam" id="NF002378">
    <property type="entry name" value="PRK01372.1"/>
    <property type="match status" value="1"/>
</dbReference>
<dbReference type="PANTHER" id="PTHR23132">
    <property type="entry name" value="D-ALANINE--D-ALANINE LIGASE"/>
    <property type="match status" value="1"/>
</dbReference>
<dbReference type="PANTHER" id="PTHR23132:SF23">
    <property type="entry name" value="D-ALANINE--D-ALANINE LIGASE B"/>
    <property type="match status" value="1"/>
</dbReference>
<dbReference type="Pfam" id="PF07478">
    <property type="entry name" value="Dala_Dala_lig_C"/>
    <property type="match status" value="1"/>
</dbReference>
<dbReference type="Pfam" id="PF01820">
    <property type="entry name" value="Dala_Dala_lig_N"/>
    <property type="match status" value="1"/>
</dbReference>
<dbReference type="PIRSF" id="PIRSF039102">
    <property type="entry name" value="Ddl/VanB"/>
    <property type="match status" value="1"/>
</dbReference>
<dbReference type="SUPFAM" id="SSF56059">
    <property type="entry name" value="Glutathione synthetase ATP-binding domain-like"/>
    <property type="match status" value="1"/>
</dbReference>
<dbReference type="SUPFAM" id="SSF52440">
    <property type="entry name" value="PreATP-grasp domain"/>
    <property type="match status" value="1"/>
</dbReference>
<dbReference type="PROSITE" id="PS50975">
    <property type="entry name" value="ATP_GRASP"/>
    <property type="match status" value="1"/>
</dbReference>
<dbReference type="PROSITE" id="PS00843">
    <property type="entry name" value="DALA_DALA_LIGASE_1"/>
    <property type="match status" value="1"/>
</dbReference>
<dbReference type="PROSITE" id="PS00844">
    <property type="entry name" value="DALA_DALA_LIGASE_2"/>
    <property type="match status" value="1"/>
</dbReference>
<accession>Q9LCT6</accession>